<dbReference type="EMBL" id="AE016830">
    <property type="protein sequence ID" value="AAO80094.1"/>
    <property type="molecule type" value="Genomic_DNA"/>
</dbReference>
<dbReference type="RefSeq" id="NP_814023.1">
    <property type="nucleotide sequence ID" value="NC_004668.1"/>
</dbReference>
<dbReference type="RefSeq" id="WP_002356221.1">
    <property type="nucleotide sequence ID" value="NZ_KE136524.1"/>
</dbReference>
<dbReference type="PDB" id="6WU9">
    <property type="method" value="EM"/>
    <property type="resolution" value="2.90 A"/>
    <property type="chains" value="M=1-146"/>
</dbReference>
<dbReference type="PDB" id="7P7Q">
    <property type="method" value="EM"/>
    <property type="resolution" value="2.40 A"/>
    <property type="chains" value="O=1-146"/>
</dbReference>
<dbReference type="PDB" id="7P7R">
    <property type="method" value="EM"/>
    <property type="resolution" value="2.90 A"/>
    <property type="chains" value="O=1-146"/>
</dbReference>
<dbReference type="PDBsum" id="6WU9"/>
<dbReference type="PDBsum" id="7P7Q"/>
<dbReference type="PDBsum" id="7P7R"/>
<dbReference type="EMDB" id="EMD-13241"/>
<dbReference type="EMDB" id="EMD-13242"/>
<dbReference type="SMR" id="Q839E5"/>
<dbReference type="STRING" id="226185.EF_0226"/>
<dbReference type="EnsemblBacteria" id="AAO80094">
    <property type="protein sequence ID" value="AAO80094"/>
    <property type="gene ID" value="EF_0226"/>
</dbReference>
<dbReference type="GeneID" id="60892720"/>
<dbReference type="KEGG" id="efa:EF0226"/>
<dbReference type="PATRIC" id="fig|226185.45.peg.41"/>
<dbReference type="eggNOG" id="COG0200">
    <property type="taxonomic scope" value="Bacteria"/>
</dbReference>
<dbReference type="HOGENOM" id="CLU_055188_4_2_9"/>
<dbReference type="Proteomes" id="UP000001415">
    <property type="component" value="Chromosome"/>
</dbReference>
<dbReference type="GO" id="GO:0022625">
    <property type="term" value="C:cytosolic large ribosomal subunit"/>
    <property type="evidence" value="ECO:0007669"/>
    <property type="project" value="TreeGrafter"/>
</dbReference>
<dbReference type="GO" id="GO:0019843">
    <property type="term" value="F:rRNA binding"/>
    <property type="evidence" value="ECO:0007669"/>
    <property type="project" value="UniProtKB-UniRule"/>
</dbReference>
<dbReference type="GO" id="GO:0003735">
    <property type="term" value="F:structural constituent of ribosome"/>
    <property type="evidence" value="ECO:0007669"/>
    <property type="project" value="InterPro"/>
</dbReference>
<dbReference type="GO" id="GO:0006412">
    <property type="term" value="P:translation"/>
    <property type="evidence" value="ECO:0007669"/>
    <property type="project" value="UniProtKB-UniRule"/>
</dbReference>
<dbReference type="FunFam" id="3.100.10.10:FF:000004">
    <property type="entry name" value="50S ribosomal protein L15"/>
    <property type="match status" value="1"/>
</dbReference>
<dbReference type="Gene3D" id="3.100.10.10">
    <property type="match status" value="1"/>
</dbReference>
<dbReference type="HAMAP" id="MF_01341">
    <property type="entry name" value="Ribosomal_uL15"/>
    <property type="match status" value="1"/>
</dbReference>
<dbReference type="InterPro" id="IPR030878">
    <property type="entry name" value="Ribosomal_uL15"/>
</dbReference>
<dbReference type="InterPro" id="IPR021131">
    <property type="entry name" value="Ribosomal_uL15/eL18"/>
</dbReference>
<dbReference type="InterPro" id="IPR036227">
    <property type="entry name" value="Ribosomal_uL15/eL18_sf"/>
</dbReference>
<dbReference type="InterPro" id="IPR005749">
    <property type="entry name" value="Ribosomal_uL15_bac-type"/>
</dbReference>
<dbReference type="InterPro" id="IPR001196">
    <property type="entry name" value="Ribosomal_uL15_CS"/>
</dbReference>
<dbReference type="NCBIfam" id="TIGR01071">
    <property type="entry name" value="rplO_bact"/>
    <property type="match status" value="1"/>
</dbReference>
<dbReference type="PANTHER" id="PTHR12934">
    <property type="entry name" value="50S RIBOSOMAL PROTEIN L15"/>
    <property type="match status" value="1"/>
</dbReference>
<dbReference type="PANTHER" id="PTHR12934:SF11">
    <property type="entry name" value="LARGE RIBOSOMAL SUBUNIT PROTEIN UL15M"/>
    <property type="match status" value="1"/>
</dbReference>
<dbReference type="Pfam" id="PF00828">
    <property type="entry name" value="Ribosomal_L27A"/>
    <property type="match status" value="1"/>
</dbReference>
<dbReference type="SUPFAM" id="SSF52080">
    <property type="entry name" value="Ribosomal proteins L15p and L18e"/>
    <property type="match status" value="1"/>
</dbReference>
<dbReference type="PROSITE" id="PS00475">
    <property type="entry name" value="RIBOSOMAL_L15"/>
    <property type="match status" value="1"/>
</dbReference>
<reference key="1">
    <citation type="journal article" date="2003" name="Science">
        <title>Role of mobile DNA in the evolution of vancomycin-resistant Enterococcus faecalis.</title>
        <authorList>
            <person name="Paulsen I.T."/>
            <person name="Banerjei L."/>
            <person name="Myers G.S.A."/>
            <person name="Nelson K.E."/>
            <person name="Seshadri R."/>
            <person name="Read T.D."/>
            <person name="Fouts D.E."/>
            <person name="Eisen J.A."/>
            <person name="Gill S.R."/>
            <person name="Heidelberg J.F."/>
            <person name="Tettelin H."/>
            <person name="Dodson R.J."/>
            <person name="Umayam L.A."/>
            <person name="Brinkac L.M."/>
            <person name="Beanan M.J."/>
            <person name="Daugherty S.C."/>
            <person name="DeBoy R.T."/>
            <person name="Durkin S.A."/>
            <person name="Kolonay J.F."/>
            <person name="Madupu R."/>
            <person name="Nelson W.C."/>
            <person name="Vamathevan J.J."/>
            <person name="Tran B."/>
            <person name="Upton J."/>
            <person name="Hansen T."/>
            <person name="Shetty J."/>
            <person name="Khouri H.M."/>
            <person name="Utterback T.R."/>
            <person name="Radune D."/>
            <person name="Ketchum K.A."/>
            <person name="Dougherty B.A."/>
            <person name="Fraser C.M."/>
        </authorList>
    </citation>
    <scope>NUCLEOTIDE SEQUENCE [LARGE SCALE GENOMIC DNA]</scope>
    <source>
        <strain>ATCC 700802 / V583</strain>
    </source>
</reference>
<comment type="function">
    <text evidence="1">Binds to the 23S rRNA.</text>
</comment>
<comment type="subunit">
    <text evidence="1">Part of the 50S ribosomal subunit.</text>
</comment>
<comment type="similarity">
    <text evidence="1">Belongs to the universal ribosomal protein uL15 family.</text>
</comment>
<feature type="chain" id="PRO_0000104719" description="Large ribosomal subunit protein uL15">
    <location>
        <begin position="1"/>
        <end position="146"/>
    </location>
</feature>
<feature type="region of interest" description="Disordered" evidence="2">
    <location>
        <begin position="1"/>
        <end position="51"/>
    </location>
</feature>
<feature type="compositionally biased region" description="Basic and acidic residues" evidence="2">
    <location>
        <begin position="1"/>
        <end position="10"/>
    </location>
</feature>
<feature type="compositionally biased region" description="Gly residues" evidence="2">
    <location>
        <begin position="23"/>
        <end position="35"/>
    </location>
</feature>
<feature type="compositionally biased region" description="Gly residues" evidence="2">
    <location>
        <begin position="42"/>
        <end position="51"/>
    </location>
</feature>
<feature type="strand" evidence="4">
    <location>
        <begin position="35"/>
        <end position="37"/>
    </location>
</feature>
<feature type="helix" evidence="4">
    <location>
        <begin position="38"/>
        <end position="40"/>
    </location>
</feature>
<feature type="helix" evidence="4">
    <location>
        <begin position="57"/>
        <end position="60"/>
    </location>
</feature>
<feature type="helix" evidence="4">
    <location>
        <begin position="81"/>
        <end position="83"/>
    </location>
</feature>
<feature type="helix" evidence="4">
    <location>
        <begin position="93"/>
        <end position="96"/>
    </location>
</feature>
<feature type="turn" evidence="4">
    <location>
        <begin position="97"/>
        <end position="100"/>
    </location>
</feature>
<feature type="strand" evidence="4">
    <location>
        <begin position="122"/>
        <end position="128"/>
    </location>
</feature>
<feature type="helix" evidence="4">
    <location>
        <begin position="130"/>
        <end position="139"/>
    </location>
</feature>
<feature type="strand" evidence="4">
    <location>
        <begin position="142"/>
        <end position="145"/>
    </location>
</feature>
<keyword id="KW-0002">3D-structure</keyword>
<keyword id="KW-1185">Reference proteome</keyword>
<keyword id="KW-0687">Ribonucleoprotein</keyword>
<keyword id="KW-0689">Ribosomal protein</keyword>
<keyword id="KW-0694">RNA-binding</keyword>
<keyword id="KW-0699">rRNA-binding</keyword>
<name>RL15_ENTFA</name>
<sequence length="146" mass="15574">MKLHELKPAEGSRQVRNRVGRGTSSGNGKTAGRGQKGQKARSGGGVRLGFEGGQTPLFRRLPKRGFTNINRKDYAVVNLDTLNRFEDGTEVTPVVLKEAGIVKNEKAGIKVLADGELTKKLTVKAAKFSKSAQEAIEAAGGSIEVI</sequence>
<accession>Q839E5</accession>
<organism>
    <name type="scientific">Enterococcus faecalis (strain ATCC 700802 / V583)</name>
    <dbReference type="NCBI Taxonomy" id="226185"/>
    <lineage>
        <taxon>Bacteria</taxon>
        <taxon>Bacillati</taxon>
        <taxon>Bacillota</taxon>
        <taxon>Bacilli</taxon>
        <taxon>Lactobacillales</taxon>
        <taxon>Enterococcaceae</taxon>
        <taxon>Enterococcus</taxon>
    </lineage>
</organism>
<gene>
    <name evidence="1" type="primary">rplO</name>
    <name type="ordered locus">EF_0226</name>
</gene>
<protein>
    <recommendedName>
        <fullName evidence="1">Large ribosomal subunit protein uL15</fullName>
    </recommendedName>
    <alternativeName>
        <fullName evidence="3">50S ribosomal protein L15</fullName>
    </alternativeName>
</protein>
<proteinExistence type="evidence at protein level"/>
<evidence type="ECO:0000255" key="1">
    <source>
        <dbReference type="HAMAP-Rule" id="MF_01341"/>
    </source>
</evidence>
<evidence type="ECO:0000256" key="2">
    <source>
        <dbReference type="SAM" id="MobiDB-lite"/>
    </source>
</evidence>
<evidence type="ECO:0000305" key="3"/>
<evidence type="ECO:0007829" key="4">
    <source>
        <dbReference type="PDB" id="6WU9"/>
    </source>
</evidence>